<name>IF414_TOBAC</name>
<evidence type="ECO:0000250" key="1"/>
<evidence type="ECO:0000255" key="2">
    <source>
        <dbReference type="PROSITE-ProRule" id="PRU00541"/>
    </source>
</evidence>
<evidence type="ECO:0000255" key="3">
    <source>
        <dbReference type="PROSITE-ProRule" id="PRU00542"/>
    </source>
</evidence>
<evidence type="ECO:0000305" key="4"/>
<keyword id="KW-0067">ATP-binding</keyword>
<keyword id="KW-0347">Helicase</keyword>
<keyword id="KW-0378">Hydrolase</keyword>
<keyword id="KW-0396">Initiation factor</keyword>
<keyword id="KW-0547">Nucleotide-binding</keyword>
<keyword id="KW-0648">Protein biosynthesis</keyword>
<keyword id="KW-1185">Reference proteome</keyword>
<keyword id="KW-0694">RNA-binding</keyword>
<proteinExistence type="evidence at transcript level"/>
<sequence length="413" mass="46876">MAGLAPEGSQFDARQYDAKMTELLGTEQEEFFTSYDEVYDSFDAMGLQENLLRGIYAYGFEKPSAIQQRGIVPFCKGLDVIQQAQSGTGKTATFCSGVLQQLDYSLVECQALVLAPTRELAQQIEKVMRALGDYLGVKVHACVGGTSVREDQRILQSGVHVVVGTPGRVFDMLRRQSLRPDHIKMFVLDEADEMLSRGFKDQIYDIFQLLPPKIQVGVFSATMPPEALEITRKFMSKPVRILVKRDDVTLEGIKQFYVNVDKEEWKLETLCDLYETLAITQSVIFVNTRRKVDWLTDKMRSRDHTVSATHGDMDQNTRDIIMREFRSGSSRVLITTDLLARGIDVQQVSLVINYDLPTQPENYLHRIGRSGRFGRKGVAINFVTKDDERMLFDIQKFYNVVIEELPANVADLL</sequence>
<organism>
    <name type="scientific">Nicotiana tabacum</name>
    <name type="common">Common tobacco</name>
    <dbReference type="NCBI Taxonomy" id="4097"/>
    <lineage>
        <taxon>Eukaryota</taxon>
        <taxon>Viridiplantae</taxon>
        <taxon>Streptophyta</taxon>
        <taxon>Embryophyta</taxon>
        <taxon>Tracheophyta</taxon>
        <taxon>Spermatophyta</taxon>
        <taxon>Magnoliopsida</taxon>
        <taxon>eudicotyledons</taxon>
        <taxon>Gunneridae</taxon>
        <taxon>Pentapetalae</taxon>
        <taxon>asterids</taxon>
        <taxon>lamiids</taxon>
        <taxon>Solanales</taxon>
        <taxon>Solanaceae</taxon>
        <taxon>Nicotianoideae</taxon>
        <taxon>Nicotianeae</taxon>
        <taxon>Nicotiana</taxon>
    </lineage>
</organism>
<accession>Q40467</accession>
<feature type="chain" id="PRO_0000054960" description="Eukaryotic initiation factor 4A-14">
    <location>
        <begin position="1"/>
        <end position="413"/>
    </location>
</feature>
<feature type="domain" description="Helicase ATP-binding" evidence="2">
    <location>
        <begin position="71"/>
        <end position="241"/>
    </location>
</feature>
<feature type="domain" description="Helicase C-terminal" evidence="3">
    <location>
        <begin position="252"/>
        <end position="413"/>
    </location>
</feature>
<feature type="short sequence motif" description="Q motif">
    <location>
        <begin position="40"/>
        <end position="68"/>
    </location>
</feature>
<feature type="short sequence motif" description="DEAD box">
    <location>
        <begin position="189"/>
        <end position="192"/>
    </location>
</feature>
<feature type="binding site" evidence="2">
    <location>
        <begin position="84"/>
        <end position="91"/>
    </location>
    <ligand>
        <name>ATP</name>
        <dbReference type="ChEBI" id="CHEBI:30616"/>
    </ligand>
</feature>
<comment type="function">
    <text evidence="1">ATP-dependent RNA helicase which is a subunit of the eIF4F complex involved in cap recognition and is required for mRNA binding to ribosome. In the current model of translation initiation, eIF4A unwinds RNA secondary structures in the 5'-UTR of mRNAs which is necessary to allow efficient binding of the small ribosomal subunit, and subsequent scanning for the initiator codon (By similarity).</text>
</comment>
<comment type="catalytic activity">
    <reaction>
        <text>ATP + H2O = ADP + phosphate + H(+)</text>
        <dbReference type="Rhea" id="RHEA:13065"/>
        <dbReference type="ChEBI" id="CHEBI:15377"/>
        <dbReference type="ChEBI" id="CHEBI:15378"/>
        <dbReference type="ChEBI" id="CHEBI:30616"/>
        <dbReference type="ChEBI" id="CHEBI:43474"/>
        <dbReference type="ChEBI" id="CHEBI:456216"/>
        <dbReference type="EC" id="3.6.4.13"/>
    </reaction>
</comment>
<comment type="subunit">
    <text evidence="1">eIF4F is a multi-subunit complex, the composition of which varies with external and internal environmental conditions. It is composed of at least EIF4A, EIF4E and EIF4G (By similarity).</text>
</comment>
<comment type="similarity">
    <text evidence="4">Belongs to the DEAD box helicase family. eIF4A subfamily.</text>
</comment>
<protein>
    <recommendedName>
        <fullName>Eukaryotic initiation factor 4A-14</fullName>
        <shortName>eIF-4A-14</shortName>
        <ecNumber>3.6.4.13</ecNumber>
    </recommendedName>
    <alternativeName>
        <fullName>ATP-dependent RNA helicase eIF4A-14</fullName>
    </alternativeName>
</protein>
<reference key="1">
    <citation type="journal article" date="1994" name="Plant Mol. Biol.">
        <title>Characterization of the tobacco eIF-4A gene family.</title>
        <authorList>
            <person name="Owttrim G.W."/>
            <person name="Mandel T."/>
            <person name="Trachsel H."/>
            <person name="Thomas A.A."/>
            <person name="Kuhlemeier C."/>
        </authorList>
    </citation>
    <scope>NUCLEOTIDE SEQUENCE [MRNA]</scope>
    <source>
        <strain>cv. SR1</strain>
    </source>
</reference>
<dbReference type="EC" id="3.6.4.13"/>
<dbReference type="EMBL" id="X79141">
    <property type="protein sequence ID" value="CAA55742.1"/>
    <property type="molecule type" value="mRNA"/>
</dbReference>
<dbReference type="PIR" id="S52023">
    <property type="entry name" value="S52023"/>
</dbReference>
<dbReference type="RefSeq" id="NP_001311757.1">
    <property type="nucleotide sequence ID" value="NM_001324828.1"/>
</dbReference>
<dbReference type="SMR" id="Q40467"/>
<dbReference type="STRING" id="4097.Q40467"/>
<dbReference type="PaxDb" id="4097-Q40467"/>
<dbReference type="GeneID" id="107764101"/>
<dbReference type="KEGG" id="nta:107764101"/>
<dbReference type="OrthoDB" id="1213547at2759"/>
<dbReference type="Proteomes" id="UP000084051">
    <property type="component" value="Unplaced"/>
</dbReference>
<dbReference type="GO" id="GO:0010494">
    <property type="term" value="C:cytoplasmic stress granule"/>
    <property type="evidence" value="ECO:0000318"/>
    <property type="project" value="GO_Central"/>
</dbReference>
<dbReference type="GO" id="GO:0005524">
    <property type="term" value="F:ATP binding"/>
    <property type="evidence" value="ECO:0007669"/>
    <property type="project" value="UniProtKB-KW"/>
</dbReference>
<dbReference type="GO" id="GO:0016887">
    <property type="term" value="F:ATP hydrolysis activity"/>
    <property type="evidence" value="ECO:0007669"/>
    <property type="project" value="RHEA"/>
</dbReference>
<dbReference type="GO" id="GO:0003723">
    <property type="term" value="F:RNA binding"/>
    <property type="evidence" value="ECO:0007669"/>
    <property type="project" value="UniProtKB-KW"/>
</dbReference>
<dbReference type="GO" id="GO:0003724">
    <property type="term" value="F:RNA helicase activity"/>
    <property type="evidence" value="ECO:0007669"/>
    <property type="project" value="UniProtKB-EC"/>
</dbReference>
<dbReference type="GO" id="GO:0003743">
    <property type="term" value="F:translation initiation factor activity"/>
    <property type="evidence" value="ECO:0000318"/>
    <property type="project" value="GO_Central"/>
</dbReference>
<dbReference type="GO" id="GO:0002183">
    <property type="term" value="P:cytoplasmic translational initiation"/>
    <property type="evidence" value="ECO:0000318"/>
    <property type="project" value="GO_Central"/>
</dbReference>
<dbReference type="CDD" id="cd17939">
    <property type="entry name" value="DEADc_EIF4A"/>
    <property type="match status" value="1"/>
</dbReference>
<dbReference type="CDD" id="cd18787">
    <property type="entry name" value="SF2_C_DEAD"/>
    <property type="match status" value="1"/>
</dbReference>
<dbReference type="FunFam" id="3.40.50.300:FF:000089">
    <property type="entry name" value="Eukaryotic initiation factor 4A-II"/>
    <property type="match status" value="1"/>
</dbReference>
<dbReference type="FunFam" id="3.40.50.300:FF:000031">
    <property type="entry name" value="Eukaryotic initiation factor 4A-III"/>
    <property type="match status" value="1"/>
</dbReference>
<dbReference type="Gene3D" id="3.40.50.300">
    <property type="entry name" value="P-loop containing nucleotide triphosphate hydrolases"/>
    <property type="match status" value="2"/>
</dbReference>
<dbReference type="InterPro" id="IPR011545">
    <property type="entry name" value="DEAD/DEAH_box_helicase_dom"/>
</dbReference>
<dbReference type="InterPro" id="IPR014001">
    <property type="entry name" value="Helicase_ATP-bd"/>
</dbReference>
<dbReference type="InterPro" id="IPR001650">
    <property type="entry name" value="Helicase_C-like"/>
</dbReference>
<dbReference type="InterPro" id="IPR027417">
    <property type="entry name" value="P-loop_NTPase"/>
</dbReference>
<dbReference type="InterPro" id="IPR000629">
    <property type="entry name" value="RNA-helicase_DEAD-box_CS"/>
</dbReference>
<dbReference type="InterPro" id="IPR014014">
    <property type="entry name" value="RNA_helicase_DEAD_Q_motif"/>
</dbReference>
<dbReference type="PANTHER" id="PTHR47958">
    <property type="entry name" value="ATP-DEPENDENT RNA HELICASE DBP3"/>
    <property type="match status" value="1"/>
</dbReference>
<dbReference type="Pfam" id="PF00270">
    <property type="entry name" value="DEAD"/>
    <property type="match status" value="1"/>
</dbReference>
<dbReference type="Pfam" id="PF00271">
    <property type="entry name" value="Helicase_C"/>
    <property type="match status" value="1"/>
</dbReference>
<dbReference type="SMART" id="SM00487">
    <property type="entry name" value="DEXDc"/>
    <property type="match status" value="1"/>
</dbReference>
<dbReference type="SMART" id="SM00490">
    <property type="entry name" value="HELICc"/>
    <property type="match status" value="1"/>
</dbReference>
<dbReference type="SUPFAM" id="SSF52540">
    <property type="entry name" value="P-loop containing nucleoside triphosphate hydrolases"/>
    <property type="match status" value="1"/>
</dbReference>
<dbReference type="PROSITE" id="PS00039">
    <property type="entry name" value="DEAD_ATP_HELICASE"/>
    <property type="match status" value="1"/>
</dbReference>
<dbReference type="PROSITE" id="PS51192">
    <property type="entry name" value="HELICASE_ATP_BIND_1"/>
    <property type="match status" value="1"/>
</dbReference>
<dbReference type="PROSITE" id="PS51194">
    <property type="entry name" value="HELICASE_CTER"/>
    <property type="match status" value="1"/>
</dbReference>
<dbReference type="PROSITE" id="PS51195">
    <property type="entry name" value="Q_MOTIF"/>
    <property type="match status" value="1"/>
</dbReference>